<name>Y4570_MYCMM</name>
<sequence>MARTEGDSWDLANSVGATATMVAAARAAATRRSRPIIADPFAEPLVRAVGLDLFTRAASGEVDLDEVAAGLGFARMVDTFAARALFFDKFFADAIAAGLRQVVIVASGLDARPYRLPWPTGMRVYEIDQPEVIEFKTTTLARLGASPTADHHPVGIDLRDDWPSALRAAGFDAARPTAWLAEGVLIGFLPPEAETRLLDNVIELSAVGSRLAADYGTINGSSAESQQLAQQMTEGWRAHGLDMDIAGLTYPGEHTDVAAYLRSHGWETATADHGDVVLAAGLAELTAADRQSPASTIGFVTAVRSTD</sequence>
<evidence type="ECO:0000250" key="1"/>
<evidence type="ECO:0000305" key="2"/>
<reference key="1">
    <citation type="journal article" date="2008" name="Genome Res.">
        <title>Insights from the complete genome sequence of Mycobacterium marinum on the evolution of Mycobacterium tuberculosis.</title>
        <authorList>
            <person name="Stinear T.P."/>
            <person name="Seemann T."/>
            <person name="Harrison P.F."/>
            <person name="Jenkin G.A."/>
            <person name="Davies J.K."/>
            <person name="Johnson P.D."/>
            <person name="Abdellah Z."/>
            <person name="Arrowsmith C."/>
            <person name="Chillingworth T."/>
            <person name="Churcher C."/>
            <person name="Clarke K."/>
            <person name="Cronin A."/>
            <person name="Davis P."/>
            <person name="Goodhead I."/>
            <person name="Holroyd N."/>
            <person name="Jagels K."/>
            <person name="Lord A."/>
            <person name="Moule S."/>
            <person name="Mungall K."/>
            <person name="Norbertczak H."/>
            <person name="Quail M.A."/>
            <person name="Rabbinowitsch E."/>
            <person name="Walker D."/>
            <person name="White B."/>
            <person name="Whitehead S."/>
            <person name="Small P.L."/>
            <person name="Brosch R."/>
            <person name="Ramakrishnan L."/>
            <person name="Fischbach M.A."/>
            <person name="Parkhill J."/>
            <person name="Cole S.T."/>
        </authorList>
    </citation>
    <scope>NUCLEOTIDE SEQUENCE [LARGE SCALE GENOMIC DNA]</scope>
    <source>
        <strain>ATCC BAA-535 / M</strain>
    </source>
</reference>
<organism>
    <name type="scientific">Mycobacterium marinum (strain ATCC BAA-535 / M)</name>
    <dbReference type="NCBI Taxonomy" id="216594"/>
    <lineage>
        <taxon>Bacteria</taxon>
        <taxon>Bacillati</taxon>
        <taxon>Actinomycetota</taxon>
        <taxon>Actinomycetes</taxon>
        <taxon>Mycobacteriales</taxon>
        <taxon>Mycobacteriaceae</taxon>
        <taxon>Mycobacterium</taxon>
        <taxon>Mycobacterium ulcerans group</taxon>
    </lineage>
</organism>
<keyword id="KW-0489">Methyltransferase</keyword>
<keyword id="KW-1185">Reference proteome</keyword>
<keyword id="KW-0949">S-adenosyl-L-methionine</keyword>
<keyword id="KW-0808">Transferase</keyword>
<comment type="function">
    <text evidence="1">Exhibits S-adenosyl-L-methionine-dependent methyltransferase activity.</text>
</comment>
<comment type="similarity">
    <text evidence="2">Belongs to the UPF0677 family.</text>
</comment>
<dbReference type="EC" id="2.1.1.-"/>
<dbReference type="EMBL" id="CP000854">
    <property type="protein sequence ID" value="ACC42975.1"/>
    <property type="molecule type" value="Genomic_DNA"/>
</dbReference>
<dbReference type="RefSeq" id="WP_012396118.1">
    <property type="nucleotide sequence ID" value="NC_010612.1"/>
</dbReference>
<dbReference type="SMR" id="B2HEF0"/>
<dbReference type="STRING" id="216594.MMAR_4570"/>
<dbReference type="KEGG" id="mmi:MMAR_4570"/>
<dbReference type="eggNOG" id="COG3315">
    <property type="taxonomic scope" value="Bacteria"/>
</dbReference>
<dbReference type="HOGENOM" id="CLU_056160_2_1_11"/>
<dbReference type="OrthoDB" id="9806164at2"/>
<dbReference type="Proteomes" id="UP000001190">
    <property type="component" value="Chromosome"/>
</dbReference>
<dbReference type="GO" id="GO:0008168">
    <property type="term" value="F:methyltransferase activity"/>
    <property type="evidence" value="ECO:0007669"/>
    <property type="project" value="UniProtKB-KW"/>
</dbReference>
<dbReference type="GO" id="GO:0032259">
    <property type="term" value="P:methylation"/>
    <property type="evidence" value="ECO:0007669"/>
    <property type="project" value="UniProtKB-KW"/>
</dbReference>
<dbReference type="Gene3D" id="3.40.50.150">
    <property type="entry name" value="Vaccinia Virus protein VP39"/>
    <property type="match status" value="1"/>
</dbReference>
<dbReference type="InterPro" id="IPR007213">
    <property type="entry name" value="Ppm1/Ppm2/Tcmp"/>
</dbReference>
<dbReference type="InterPro" id="IPR029063">
    <property type="entry name" value="SAM-dependent_MTases_sf"/>
</dbReference>
<dbReference type="InterPro" id="IPR011610">
    <property type="entry name" value="SAM_mthyl_Trfase_ML2640-like"/>
</dbReference>
<dbReference type="NCBIfam" id="TIGR00027">
    <property type="entry name" value="mthyl_TIGR00027"/>
    <property type="match status" value="1"/>
</dbReference>
<dbReference type="PANTHER" id="PTHR43619">
    <property type="entry name" value="S-ADENOSYL-L-METHIONINE-DEPENDENT METHYLTRANSFERASE YKTD-RELATED"/>
    <property type="match status" value="1"/>
</dbReference>
<dbReference type="PANTHER" id="PTHR43619:SF2">
    <property type="entry name" value="S-ADENOSYL-L-METHIONINE-DEPENDENT METHYLTRANSFERASES SUPERFAMILY PROTEIN"/>
    <property type="match status" value="1"/>
</dbReference>
<dbReference type="Pfam" id="PF04072">
    <property type="entry name" value="LCM"/>
    <property type="match status" value="1"/>
</dbReference>
<dbReference type="SUPFAM" id="SSF53335">
    <property type="entry name" value="S-adenosyl-L-methionine-dependent methyltransferases"/>
    <property type="match status" value="1"/>
</dbReference>
<proteinExistence type="inferred from homology"/>
<accession>B2HEF0</accession>
<protein>
    <recommendedName>
        <fullName>Putative S-adenosyl-L-methionine-dependent methyltransferase MMAR_4570</fullName>
        <ecNumber>2.1.1.-</ecNumber>
    </recommendedName>
</protein>
<feature type="chain" id="PRO_0000361171" description="Putative S-adenosyl-L-methionine-dependent methyltransferase MMAR_4570">
    <location>
        <begin position="1"/>
        <end position="307"/>
    </location>
</feature>
<feature type="binding site" evidence="1">
    <location>
        <position position="128"/>
    </location>
    <ligand>
        <name>S-adenosyl-L-methionine</name>
        <dbReference type="ChEBI" id="CHEBI:59789"/>
    </ligand>
</feature>
<feature type="binding site" evidence="1">
    <location>
        <begin position="157"/>
        <end position="158"/>
    </location>
    <ligand>
        <name>S-adenosyl-L-methionine</name>
        <dbReference type="ChEBI" id="CHEBI:59789"/>
    </ligand>
</feature>
<gene>
    <name type="ordered locus">MMAR_4570</name>
</gene>